<dbReference type="EC" id="6.1.1.10" evidence="1"/>
<dbReference type="EMBL" id="AE017340">
    <property type="protein sequence ID" value="AAV81552.1"/>
    <property type="molecule type" value="Genomic_DNA"/>
</dbReference>
<dbReference type="RefSeq" id="WP_011233963.1">
    <property type="nucleotide sequence ID" value="NC_006512.1"/>
</dbReference>
<dbReference type="SMR" id="Q5R0G6"/>
<dbReference type="STRING" id="283942.IL0711"/>
<dbReference type="GeneID" id="41335865"/>
<dbReference type="KEGG" id="ilo:IL0711"/>
<dbReference type="eggNOG" id="COG0073">
    <property type="taxonomic scope" value="Bacteria"/>
</dbReference>
<dbReference type="eggNOG" id="COG0143">
    <property type="taxonomic scope" value="Bacteria"/>
</dbReference>
<dbReference type="HOGENOM" id="CLU_009710_7_0_6"/>
<dbReference type="OrthoDB" id="9810191at2"/>
<dbReference type="Proteomes" id="UP000001171">
    <property type="component" value="Chromosome"/>
</dbReference>
<dbReference type="GO" id="GO:0005829">
    <property type="term" value="C:cytosol"/>
    <property type="evidence" value="ECO:0007669"/>
    <property type="project" value="TreeGrafter"/>
</dbReference>
<dbReference type="GO" id="GO:0005524">
    <property type="term" value="F:ATP binding"/>
    <property type="evidence" value="ECO:0007669"/>
    <property type="project" value="UniProtKB-UniRule"/>
</dbReference>
<dbReference type="GO" id="GO:0046872">
    <property type="term" value="F:metal ion binding"/>
    <property type="evidence" value="ECO:0007669"/>
    <property type="project" value="UniProtKB-KW"/>
</dbReference>
<dbReference type="GO" id="GO:0004825">
    <property type="term" value="F:methionine-tRNA ligase activity"/>
    <property type="evidence" value="ECO:0007669"/>
    <property type="project" value="UniProtKB-UniRule"/>
</dbReference>
<dbReference type="GO" id="GO:0000049">
    <property type="term" value="F:tRNA binding"/>
    <property type="evidence" value="ECO:0007669"/>
    <property type="project" value="UniProtKB-KW"/>
</dbReference>
<dbReference type="GO" id="GO:0006431">
    <property type="term" value="P:methionyl-tRNA aminoacylation"/>
    <property type="evidence" value="ECO:0007669"/>
    <property type="project" value="UniProtKB-UniRule"/>
</dbReference>
<dbReference type="CDD" id="cd07957">
    <property type="entry name" value="Anticodon_Ia_Met"/>
    <property type="match status" value="1"/>
</dbReference>
<dbReference type="CDD" id="cd00814">
    <property type="entry name" value="MetRS_core"/>
    <property type="match status" value="1"/>
</dbReference>
<dbReference type="CDD" id="cd02800">
    <property type="entry name" value="tRNA_bind_EcMetRS_like"/>
    <property type="match status" value="1"/>
</dbReference>
<dbReference type="FunFam" id="1.10.730.10:FF:000005">
    <property type="entry name" value="Methionine--tRNA ligase"/>
    <property type="match status" value="1"/>
</dbReference>
<dbReference type="FunFam" id="2.20.28.20:FF:000001">
    <property type="entry name" value="Methionine--tRNA ligase"/>
    <property type="match status" value="1"/>
</dbReference>
<dbReference type="FunFam" id="2.40.50.140:FF:000042">
    <property type="entry name" value="Methionine--tRNA ligase"/>
    <property type="match status" value="1"/>
</dbReference>
<dbReference type="Gene3D" id="3.40.50.620">
    <property type="entry name" value="HUPs"/>
    <property type="match status" value="1"/>
</dbReference>
<dbReference type="Gene3D" id="1.10.730.10">
    <property type="entry name" value="Isoleucyl-tRNA Synthetase, Domain 1"/>
    <property type="match status" value="1"/>
</dbReference>
<dbReference type="Gene3D" id="2.20.28.20">
    <property type="entry name" value="Methionyl-tRNA synthetase, Zn-domain"/>
    <property type="match status" value="1"/>
</dbReference>
<dbReference type="Gene3D" id="2.40.50.140">
    <property type="entry name" value="Nucleic acid-binding proteins"/>
    <property type="match status" value="1"/>
</dbReference>
<dbReference type="HAMAP" id="MF_00098">
    <property type="entry name" value="Met_tRNA_synth_type1"/>
    <property type="match status" value="1"/>
</dbReference>
<dbReference type="InterPro" id="IPR001412">
    <property type="entry name" value="aa-tRNA-synth_I_CS"/>
</dbReference>
<dbReference type="InterPro" id="IPR041872">
    <property type="entry name" value="Anticodon_Met"/>
</dbReference>
<dbReference type="InterPro" id="IPR004495">
    <property type="entry name" value="Met-tRNA-synth_bsu_C"/>
</dbReference>
<dbReference type="InterPro" id="IPR023458">
    <property type="entry name" value="Met-tRNA_ligase_1"/>
</dbReference>
<dbReference type="InterPro" id="IPR014758">
    <property type="entry name" value="Met-tRNA_synth"/>
</dbReference>
<dbReference type="InterPro" id="IPR015413">
    <property type="entry name" value="Methionyl/Leucyl_tRNA_Synth"/>
</dbReference>
<dbReference type="InterPro" id="IPR033911">
    <property type="entry name" value="MetRS_core"/>
</dbReference>
<dbReference type="InterPro" id="IPR029038">
    <property type="entry name" value="MetRS_Zn"/>
</dbReference>
<dbReference type="InterPro" id="IPR012340">
    <property type="entry name" value="NA-bd_OB-fold"/>
</dbReference>
<dbReference type="InterPro" id="IPR014729">
    <property type="entry name" value="Rossmann-like_a/b/a_fold"/>
</dbReference>
<dbReference type="InterPro" id="IPR002547">
    <property type="entry name" value="tRNA-bd_dom"/>
</dbReference>
<dbReference type="InterPro" id="IPR009080">
    <property type="entry name" value="tRNAsynth_Ia_anticodon-bd"/>
</dbReference>
<dbReference type="NCBIfam" id="TIGR00398">
    <property type="entry name" value="metG"/>
    <property type="match status" value="1"/>
</dbReference>
<dbReference type="NCBIfam" id="TIGR00399">
    <property type="entry name" value="metG_C_term"/>
    <property type="match status" value="1"/>
</dbReference>
<dbReference type="NCBIfam" id="NF001100">
    <property type="entry name" value="PRK00133.1"/>
    <property type="match status" value="1"/>
</dbReference>
<dbReference type="PANTHER" id="PTHR45765">
    <property type="entry name" value="METHIONINE--TRNA LIGASE"/>
    <property type="match status" value="1"/>
</dbReference>
<dbReference type="PANTHER" id="PTHR45765:SF1">
    <property type="entry name" value="METHIONINE--TRNA LIGASE, CYTOPLASMIC"/>
    <property type="match status" value="1"/>
</dbReference>
<dbReference type="Pfam" id="PF19303">
    <property type="entry name" value="Anticodon_3"/>
    <property type="match status" value="1"/>
</dbReference>
<dbReference type="Pfam" id="PF09334">
    <property type="entry name" value="tRNA-synt_1g"/>
    <property type="match status" value="1"/>
</dbReference>
<dbReference type="Pfam" id="PF01588">
    <property type="entry name" value="tRNA_bind"/>
    <property type="match status" value="1"/>
</dbReference>
<dbReference type="PRINTS" id="PR01041">
    <property type="entry name" value="TRNASYNTHMET"/>
</dbReference>
<dbReference type="SUPFAM" id="SSF47323">
    <property type="entry name" value="Anticodon-binding domain of a subclass of class I aminoacyl-tRNA synthetases"/>
    <property type="match status" value="1"/>
</dbReference>
<dbReference type="SUPFAM" id="SSF57770">
    <property type="entry name" value="Methionyl-tRNA synthetase (MetRS), Zn-domain"/>
    <property type="match status" value="1"/>
</dbReference>
<dbReference type="SUPFAM" id="SSF50249">
    <property type="entry name" value="Nucleic acid-binding proteins"/>
    <property type="match status" value="1"/>
</dbReference>
<dbReference type="SUPFAM" id="SSF52374">
    <property type="entry name" value="Nucleotidylyl transferase"/>
    <property type="match status" value="1"/>
</dbReference>
<dbReference type="PROSITE" id="PS00178">
    <property type="entry name" value="AA_TRNA_LIGASE_I"/>
    <property type="match status" value="1"/>
</dbReference>
<dbReference type="PROSITE" id="PS50886">
    <property type="entry name" value="TRBD"/>
    <property type="match status" value="1"/>
</dbReference>
<organism>
    <name type="scientific">Idiomarina loihiensis (strain ATCC BAA-735 / DSM 15497 / L2-TR)</name>
    <dbReference type="NCBI Taxonomy" id="283942"/>
    <lineage>
        <taxon>Bacteria</taxon>
        <taxon>Pseudomonadati</taxon>
        <taxon>Pseudomonadota</taxon>
        <taxon>Gammaproteobacteria</taxon>
        <taxon>Alteromonadales</taxon>
        <taxon>Idiomarinaceae</taxon>
        <taxon>Idiomarina</taxon>
    </lineage>
</organism>
<keyword id="KW-0030">Aminoacyl-tRNA synthetase</keyword>
<keyword id="KW-0067">ATP-binding</keyword>
<keyword id="KW-0963">Cytoplasm</keyword>
<keyword id="KW-0436">Ligase</keyword>
<keyword id="KW-0479">Metal-binding</keyword>
<keyword id="KW-0547">Nucleotide-binding</keyword>
<keyword id="KW-0648">Protein biosynthesis</keyword>
<keyword id="KW-1185">Reference proteome</keyword>
<keyword id="KW-0694">RNA-binding</keyword>
<keyword id="KW-0820">tRNA-binding</keyword>
<keyword id="KW-0862">Zinc</keyword>
<evidence type="ECO:0000255" key="1">
    <source>
        <dbReference type="HAMAP-Rule" id="MF_00098"/>
    </source>
</evidence>
<proteinExistence type="inferred from homology"/>
<name>SYM_IDILO</name>
<feature type="chain" id="PRO_0000139136" description="Methionine--tRNA ligase">
    <location>
        <begin position="1"/>
        <end position="677"/>
    </location>
</feature>
<feature type="domain" description="tRNA-binding" evidence="1">
    <location>
        <begin position="576"/>
        <end position="677"/>
    </location>
</feature>
<feature type="short sequence motif" description="'HIGH' region">
    <location>
        <begin position="15"/>
        <end position="25"/>
    </location>
</feature>
<feature type="short sequence motif" description="'KMSKS' region">
    <location>
        <begin position="332"/>
        <end position="336"/>
    </location>
</feature>
<feature type="binding site" evidence="1">
    <location>
        <position position="146"/>
    </location>
    <ligand>
        <name>Zn(2+)</name>
        <dbReference type="ChEBI" id="CHEBI:29105"/>
    </ligand>
</feature>
<feature type="binding site" evidence="1">
    <location>
        <position position="149"/>
    </location>
    <ligand>
        <name>Zn(2+)</name>
        <dbReference type="ChEBI" id="CHEBI:29105"/>
    </ligand>
</feature>
<feature type="binding site" evidence="1">
    <location>
        <position position="159"/>
    </location>
    <ligand>
        <name>Zn(2+)</name>
        <dbReference type="ChEBI" id="CHEBI:29105"/>
    </ligand>
</feature>
<feature type="binding site" evidence="1">
    <location>
        <position position="162"/>
    </location>
    <ligand>
        <name>Zn(2+)</name>
        <dbReference type="ChEBI" id="CHEBI:29105"/>
    </ligand>
</feature>
<feature type="binding site" evidence="1">
    <location>
        <position position="335"/>
    </location>
    <ligand>
        <name>ATP</name>
        <dbReference type="ChEBI" id="CHEBI:30616"/>
    </ligand>
</feature>
<sequence length="677" mass="76748">MSQSARKILVTNALPYANGPIHIGHMLGYIQADIWVRFQKLRGNECHFVCADDAHGTPIMLKAQQLGITPEQMIGDMQRSHESDFSDFLVGFDHYYSTHSDENRELAETIYTRLDKAGHIKTKVIEQLYDPQKEMFLPDRFVKGECPDCGAEDQYGDNCDVCGATYAPTDLKNPKSVVSGAEPELRESEHYFFDLPAFGDMLKSWTRSGSLQNEMANKLNEWFEQGLQRWDISRDAPYFGFKIPGTENKYFYVWLDAPIGYMSSFKNYCSTTGKADWDTYWQADSEAELYHFIGKDIIYFHSLFWPAMLKGADFRQPTNVWAHGFITVNGTKMSKSKGTFIKARTYLEHLDPEYLRYYFAAKLTSRIDDLDLNLTDFAQRVNSDLVGKVINIASRCAGFIQKKFDGRLSSNVADSALLEDFQLAGDNIAELYEKREFSRAMRDIMALADRANQYIADKEPWQLIKQEGSEQEVHEICSLGINLFRVLMVYLAPVVPKLTEEVQSFLNDNFTWDSHKTALTDHPIDKFKALMQRVEMDDVNAMIDASKEEQASQTPAVEANDELKKEPIADEISFDDFAKVDLRVARIANAEHVEGADKLLKLTLDLGGETRQVFAGIKSAYDPEALKGQLTVMVANLAPRKMRFGLSEGMVLAAGPGKDEIYILNPHDGAKPGMRIM</sequence>
<comment type="function">
    <text evidence="1">Is required not only for elongation of protein synthesis but also for the initiation of all mRNA translation through initiator tRNA(fMet) aminoacylation.</text>
</comment>
<comment type="catalytic activity">
    <reaction evidence="1">
        <text>tRNA(Met) + L-methionine + ATP = L-methionyl-tRNA(Met) + AMP + diphosphate</text>
        <dbReference type="Rhea" id="RHEA:13481"/>
        <dbReference type="Rhea" id="RHEA-COMP:9667"/>
        <dbReference type="Rhea" id="RHEA-COMP:9698"/>
        <dbReference type="ChEBI" id="CHEBI:30616"/>
        <dbReference type="ChEBI" id="CHEBI:33019"/>
        <dbReference type="ChEBI" id="CHEBI:57844"/>
        <dbReference type="ChEBI" id="CHEBI:78442"/>
        <dbReference type="ChEBI" id="CHEBI:78530"/>
        <dbReference type="ChEBI" id="CHEBI:456215"/>
        <dbReference type="EC" id="6.1.1.10"/>
    </reaction>
</comment>
<comment type="cofactor">
    <cofactor evidence="1">
        <name>Zn(2+)</name>
        <dbReference type="ChEBI" id="CHEBI:29105"/>
    </cofactor>
    <text evidence="1">Binds 1 zinc ion per subunit.</text>
</comment>
<comment type="subunit">
    <text evidence="1">Homodimer.</text>
</comment>
<comment type="subcellular location">
    <subcellularLocation>
        <location evidence="1">Cytoplasm</location>
    </subcellularLocation>
</comment>
<comment type="similarity">
    <text evidence="1">Belongs to the class-I aminoacyl-tRNA synthetase family. MetG type 1 subfamily.</text>
</comment>
<accession>Q5R0G6</accession>
<gene>
    <name evidence="1" type="primary">metG</name>
    <name type="ordered locus">IL0711</name>
</gene>
<reference key="1">
    <citation type="journal article" date="2004" name="Proc. Natl. Acad. Sci. U.S.A.">
        <title>Genome sequence of the deep-sea gamma-proteobacterium Idiomarina loihiensis reveals amino acid fermentation as a source of carbon and energy.</title>
        <authorList>
            <person name="Hou S."/>
            <person name="Saw J.H."/>
            <person name="Lee K.S."/>
            <person name="Freitas T.A."/>
            <person name="Belisle C."/>
            <person name="Kawarabayasi Y."/>
            <person name="Donachie S.P."/>
            <person name="Pikina A."/>
            <person name="Galperin M.Y."/>
            <person name="Koonin E.V."/>
            <person name="Makarova K.S."/>
            <person name="Omelchenko M.V."/>
            <person name="Sorokin A."/>
            <person name="Wolf Y.I."/>
            <person name="Li Q.X."/>
            <person name="Keum Y.S."/>
            <person name="Campbell S."/>
            <person name="Denery J."/>
            <person name="Aizawa S."/>
            <person name="Shibata S."/>
            <person name="Malahoff A."/>
            <person name="Alam M."/>
        </authorList>
    </citation>
    <scope>NUCLEOTIDE SEQUENCE [LARGE SCALE GENOMIC DNA]</scope>
    <source>
        <strain>ATCC BAA-735 / DSM 15497 / L2-TR</strain>
    </source>
</reference>
<protein>
    <recommendedName>
        <fullName evidence="1">Methionine--tRNA ligase</fullName>
        <ecNumber evidence="1">6.1.1.10</ecNumber>
    </recommendedName>
    <alternativeName>
        <fullName evidence="1">Methionyl-tRNA synthetase</fullName>
        <shortName evidence="1">MetRS</shortName>
    </alternativeName>
</protein>